<gene>
    <name evidence="1" type="primary">aroE</name>
    <name type="ordered locus">ECH74115_4604</name>
</gene>
<sequence>METYAVFGNPIAHSKSPFIHQQFAQQLNIEHPYGRVLAPINDFVNTLNAFFSAGGKGANVTVPFKEEAFARADELTERAALAGAVNTLKRLEDGRLLGDNTDGVGLLSDLERLSFIRPGLRILLIGAGGASRGVLLPLLSLDCAVTITNRTVSRAEELAKLFAHTGSIQALGMDELEGHEFDLIINATSSGISGDIPAIPSSLIHPGIYCYDMFYQKGKTPFLAWCEQRGSKPTADGLGMLVAQAAHAFLLWHGVLPDVEPVIKQLQEELSA</sequence>
<reference key="1">
    <citation type="journal article" date="2011" name="Proc. Natl. Acad. Sci. U.S.A.">
        <title>Genomic anatomy of Escherichia coli O157:H7 outbreaks.</title>
        <authorList>
            <person name="Eppinger M."/>
            <person name="Mammel M.K."/>
            <person name="Leclerc J.E."/>
            <person name="Ravel J."/>
            <person name="Cebula T.A."/>
        </authorList>
    </citation>
    <scope>NUCLEOTIDE SEQUENCE [LARGE SCALE GENOMIC DNA]</scope>
    <source>
        <strain>EC4115 / EHEC</strain>
    </source>
</reference>
<evidence type="ECO:0000255" key="1">
    <source>
        <dbReference type="HAMAP-Rule" id="MF_00222"/>
    </source>
</evidence>
<dbReference type="EC" id="1.1.1.25" evidence="1"/>
<dbReference type="EMBL" id="CP001164">
    <property type="protein sequence ID" value="ACI36317.1"/>
    <property type="molecule type" value="Genomic_DNA"/>
</dbReference>
<dbReference type="RefSeq" id="WP_000451254.1">
    <property type="nucleotide sequence ID" value="NC_011353.1"/>
</dbReference>
<dbReference type="SMR" id="B5YT01"/>
<dbReference type="KEGG" id="ecf:ECH74115_4604"/>
<dbReference type="HOGENOM" id="CLU_044063_2_1_6"/>
<dbReference type="UniPathway" id="UPA00053">
    <property type="reaction ID" value="UER00087"/>
</dbReference>
<dbReference type="GO" id="GO:0005829">
    <property type="term" value="C:cytosol"/>
    <property type="evidence" value="ECO:0007669"/>
    <property type="project" value="TreeGrafter"/>
</dbReference>
<dbReference type="GO" id="GO:0050661">
    <property type="term" value="F:NADP binding"/>
    <property type="evidence" value="ECO:0007669"/>
    <property type="project" value="InterPro"/>
</dbReference>
<dbReference type="GO" id="GO:0004764">
    <property type="term" value="F:shikimate 3-dehydrogenase (NADP+) activity"/>
    <property type="evidence" value="ECO:0007669"/>
    <property type="project" value="UniProtKB-UniRule"/>
</dbReference>
<dbReference type="GO" id="GO:0008652">
    <property type="term" value="P:amino acid biosynthetic process"/>
    <property type="evidence" value="ECO:0007669"/>
    <property type="project" value="UniProtKB-KW"/>
</dbReference>
<dbReference type="GO" id="GO:0009073">
    <property type="term" value="P:aromatic amino acid family biosynthetic process"/>
    <property type="evidence" value="ECO:0007669"/>
    <property type="project" value="UniProtKB-KW"/>
</dbReference>
<dbReference type="GO" id="GO:0009423">
    <property type="term" value="P:chorismate biosynthetic process"/>
    <property type="evidence" value="ECO:0007669"/>
    <property type="project" value="UniProtKB-UniRule"/>
</dbReference>
<dbReference type="GO" id="GO:0019632">
    <property type="term" value="P:shikimate metabolic process"/>
    <property type="evidence" value="ECO:0007669"/>
    <property type="project" value="InterPro"/>
</dbReference>
<dbReference type="CDD" id="cd01065">
    <property type="entry name" value="NAD_bind_Shikimate_DH"/>
    <property type="match status" value="1"/>
</dbReference>
<dbReference type="FunFam" id="3.40.50.10860:FF:000006">
    <property type="entry name" value="Shikimate dehydrogenase (NADP(+))"/>
    <property type="match status" value="1"/>
</dbReference>
<dbReference type="FunFam" id="3.40.50.720:FF:000104">
    <property type="entry name" value="Shikimate dehydrogenase (NADP(+))"/>
    <property type="match status" value="1"/>
</dbReference>
<dbReference type="Gene3D" id="3.40.50.10860">
    <property type="entry name" value="Leucine Dehydrogenase, chain A, domain 1"/>
    <property type="match status" value="1"/>
</dbReference>
<dbReference type="Gene3D" id="3.40.50.720">
    <property type="entry name" value="NAD(P)-binding Rossmann-like Domain"/>
    <property type="match status" value="1"/>
</dbReference>
<dbReference type="HAMAP" id="MF_00222">
    <property type="entry name" value="Shikimate_DH_AroE"/>
    <property type="match status" value="1"/>
</dbReference>
<dbReference type="InterPro" id="IPR046346">
    <property type="entry name" value="Aminoacid_DH-like_N_sf"/>
</dbReference>
<dbReference type="InterPro" id="IPR036291">
    <property type="entry name" value="NAD(P)-bd_dom_sf"/>
</dbReference>
<dbReference type="InterPro" id="IPR041121">
    <property type="entry name" value="SDH_C"/>
</dbReference>
<dbReference type="InterPro" id="IPR011342">
    <property type="entry name" value="Shikimate_DH"/>
</dbReference>
<dbReference type="InterPro" id="IPR013708">
    <property type="entry name" value="Shikimate_DH-bd_N"/>
</dbReference>
<dbReference type="InterPro" id="IPR022893">
    <property type="entry name" value="Shikimate_DH_fam"/>
</dbReference>
<dbReference type="InterPro" id="IPR006151">
    <property type="entry name" value="Shikm_DH/Glu-tRNA_Rdtase"/>
</dbReference>
<dbReference type="NCBIfam" id="TIGR00507">
    <property type="entry name" value="aroE"/>
    <property type="match status" value="1"/>
</dbReference>
<dbReference type="NCBIfam" id="NF001310">
    <property type="entry name" value="PRK00258.1-2"/>
    <property type="match status" value="1"/>
</dbReference>
<dbReference type="PANTHER" id="PTHR21089:SF1">
    <property type="entry name" value="BIFUNCTIONAL 3-DEHYDROQUINATE DEHYDRATASE_SHIKIMATE DEHYDROGENASE, CHLOROPLASTIC"/>
    <property type="match status" value="1"/>
</dbReference>
<dbReference type="PANTHER" id="PTHR21089">
    <property type="entry name" value="SHIKIMATE DEHYDROGENASE"/>
    <property type="match status" value="1"/>
</dbReference>
<dbReference type="Pfam" id="PF18317">
    <property type="entry name" value="SDH_C"/>
    <property type="match status" value="1"/>
</dbReference>
<dbReference type="Pfam" id="PF01488">
    <property type="entry name" value="Shikimate_DH"/>
    <property type="match status" value="1"/>
</dbReference>
<dbReference type="Pfam" id="PF08501">
    <property type="entry name" value="Shikimate_dh_N"/>
    <property type="match status" value="1"/>
</dbReference>
<dbReference type="SUPFAM" id="SSF53223">
    <property type="entry name" value="Aminoacid dehydrogenase-like, N-terminal domain"/>
    <property type="match status" value="1"/>
</dbReference>
<dbReference type="SUPFAM" id="SSF51735">
    <property type="entry name" value="NAD(P)-binding Rossmann-fold domains"/>
    <property type="match status" value="1"/>
</dbReference>
<comment type="function">
    <text evidence="1">Involved in the biosynthesis of the chorismate, which leads to the biosynthesis of aromatic amino acids. Catalyzes the reversible NADPH linked reduction of 3-dehydroshikimate (DHSA) to yield shikimate (SA).</text>
</comment>
<comment type="catalytic activity">
    <reaction evidence="1">
        <text>shikimate + NADP(+) = 3-dehydroshikimate + NADPH + H(+)</text>
        <dbReference type="Rhea" id="RHEA:17737"/>
        <dbReference type="ChEBI" id="CHEBI:15378"/>
        <dbReference type="ChEBI" id="CHEBI:16630"/>
        <dbReference type="ChEBI" id="CHEBI:36208"/>
        <dbReference type="ChEBI" id="CHEBI:57783"/>
        <dbReference type="ChEBI" id="CHEBI:58349"/>
        <dbReference type="EC" id="1.1.1.25"/>
    </reaction>
</comment>
<comment type="pathway">
    <text evidence="1">Metabolic intermediate biosynthesis; chorismate biosynthesis; chorismate from D-erythrose 4-phosphate and phosphoenolpyruvate: step 4/7.</text>
</comment>
<comment type="subunit">
    <text evidence="1">Homodimer.</text>
</comment>
<comment type="similarity">
    <text evidence="1">Belongs to the shikimate dehydrogenase family.</text>
</comment>
<proteinExistence type="inferred from homology"/>
<protein>
    <recommendedName>
        <fullName evidence="1">Shikimate dehydrogenase (NADP(+))</fullName>
        <shortName evidence="1">SDH</shortName>
        <ecNumber evidence="1">1.1.1.25</ecNumber>
    </recommendedName>
</protein>
<accession>B5YT01</accession>
<organism>
    <name type="scientific">Escherichia coli O157:H7 (strain EC4115 / EHEC)</name>
    <dbReference type="NCBI Taxonomy" id="444450"/>
    <lineage>
        <taxon>Bacteria</taxon>
        <taxon>Pseudomonadati</taxon>
        <taxon>Pseudomonadota</taxon>
        <taxon>Gammaproteobacteria</taxon>
        <taxon>Enterobacterales</taxon>
        <taxon>Enterobacteriaceae</taxon>
        <taxon>Escherichia</taxon>
    </lineage>
</organism>
<name>AROE_ECO5E</name>
<keyword id="KW-0028">Amino-acid biosynthesis</keyword>
<keyword id="KW-0057">Aromatic amino acid biosynthesis</keyword>
<keyword id="KW-0521">NADP</keyword>
<keyword id="KW-0560">Oxidoreductase</keyword>
<feature type="chain" id="PRO_1000100115" description="Shikimate dehydrogenase (NADP(+))">
    <location>
        <begin position="1"/>
        <end position="272"/>
    </location>
</feature>
<feature type="active site" description="Proton acceptor" evidence="1">
    <location>
        <position position="65"/>
    </location>
</feature>
<feature type="binding site" evidence="1">
    <location>
        <begin position="14"/>
        <end position="16"/>
    </location>
    <ligand>
        <name>shikimate</name>
        <dbReference type="ChEBI" id="CHEBI:36208"/>
    </ligand>
</feature>
<feature type="binding site" evidence="1">
    <location>
        <position position="61"/>
    </location>
    <ligand>
        <name>shikimate</name>
        <dbReference type="ChEBI" id="CHEBI:36208"/>
    </ligand>
</feature>
<feature type="binding site" evidence="1">
    <location>
        <position position="77"/>
    </location>
    <ligand>
        <name>NADP(+)</name>
        <dbReference type="ChEBI" id="CHEBI:58349"/>
    </ligand>
</feature>
<feature type="binding site" evidence="1">
    <location>
        <position position="86"/>
    </location>
    <ligand>
        <name>shikimate</name>
        <dbReference type="ChEBI" id="CHEBI:36208"/>
    </ligand>
</feature>
<feature type="binding site" evidence="1">
    <location>
        <position position="102"/>
    </location>
    <ligand>
        <name>shikimate</name>
        <dbReference type="ChEBI" id="CHEBI:36208"/>
    </ligand>
</feature>
<feature type="binding site" evidence="1">
    <location>
        <begin position="126"/>
        <end position="130"/>
    </location>
    <ligand>
        <name>NADP(+)</name>
        <dbReference type="ChEBI" id="CHEBI:58349"/>
    </ligand>
</feature>
<feature type="binding site" evidence="1">
    <location>
        <begin position="149"/>
        <end position="154"/>
    </location>
    <ligand>
        <name>NADP(+)</name>
        <dbReference type="ChEBI" id="CHEBI:58349"/>
    </ligand>
</feature>
<feature type="binding site" evidence="1">
    <location>
        <position position="213"/>
    </location>
    <ligand>
        <name>NADP(+)</name>
        <dbReference type="ChEBI" id="CHEBI:58349"/>
    </ligand>
</feature>
<feature type="binding site" evidence="1">
    <location>
        <position position="215"/>
    </location>
    <ligand>
        <name>shikimate</name>
        <dbReference type="ChEBI" id="CHEBI:36208"/>
    </ligand>
</feature>
<feature type="binding site" evidence="1">
    <location>
        <position position="237"/>
    </location>
    <ligand>
        <name>NADP(+)</name>
        <dbReference type="ChEBI" id="CHEBI:58349"/>
    </ligand>
</feature>